<gene>
    <name evidence="1" type="primary">lysS</name>
    <name type="ordered locus">CFPG_626</name>
</gene>
<keyword id="KW-0030">Aminoacyl-tRNA synthetase</keyword>
<keyword id="KW-0067">ATP-binding</keyword>
<keyword id="KW-0963">Cytoplasm</keyword>
<keyword id="KW-0436">Ligase</keyword>
<keyword id="KW-0460">Magnesium</keyword>
<keyword id="KW-0479">Metal-binding</keyword>
<keyword id="KW-0547">Nucleotide-binding</keyword>
<keyword id="KW-0648">Protein biosynthesis</keyword>
<keyword id="KW-1185">Reference proteome</keyword>
<evidence type="ECO:0000255" key="1">
    <source>
        <dbReference type="HAMAP-Rule" id="MF_00252"/>
    </source>
</evidence>
<reference key="1">
    <citation type="journal article" date="2008" name="Science">
        <title>Genome of an endosymbiont coupling N2 fixation to cellulolysis within RT protist cells in termite gut.</title>
        <authorList>
            <person name="Hongoh Y."/>
            <person name="Sharma V.K."/>
            <person name="Prakash T."/>
            <person name="Noda S."/>
            <person name="Toh H."/>
            <person name="Taylor T.D."/>
            <person name="Kudo T."/>
            <person name="Sakaki Y."/>
            <person name="Toyoda A."/>
            <person name="Hattori M."/>
            <person name="Ohkuma M."/>
        </authorList>
    </citation>
    <scope>NUCLEOTIDE SEQUENCE [LARGE SCALE GENOMIC DNA]</scope>
</reference>
<name>SYK_AZOPC</name>
<accession>B6YRR7</accession>
<feature type="chain" id="PRO_1000125513" description="Lysine--tRNA ligase">
    <location>
        <begin position="1"/>
        <end position="500"/>
    </location>
</feature>
<feature type="binding site" evidence="1">
    <location>
        <position position="407"/>
    </location>
    <ligand>
        <name>Mg(2+)</name>
        <dbReference type="ChEBI" id="CHEBI:18420"/>
        <label>1</label>
    </ligand>
</feature>
<feature type="binding site" evidence="1">
    <location>
        <position position="414"/>
    </location>
    <ligand>
        <name>Mg(2+)</name>
        <dbReference type="ChEBI" id="CHEBI:18420"/>
        <label>1</label>
    </ligand>
</feature>
<feature type="binding site" evidence="1">
    <location>
        <position position="414"/>
    </location>
    <ligand>
        <name>Mg(2+)</name>
        <dbReference type="ChEBI" id="CHEBI:18420"/>
        <label>2</label>
    </ligand>
</feature>
<sequence length="500" mass="58279">MSEQEIFRRKSLEELKSRGIDPYPADEYIVTDYSTEIKRGFREDSPRWEVSVAGRMMSRRIMGKVSFVELQDSVGRIQLYIKCDSLCPNENKDLYYIVFKKLLDIGDFIGIKGYVFCTQTGEISIHVNSLTLLSKSLRPLPIVKSKDGMTYDSYNDVELRYRQRYVDLIVNEGTKDIFLKRTKIFNSVRSFFNEKGYIEVDTPVLQSIPGGAAARPFVTHHNALDIPCYLRIANELYLKRLIVGGFEGVYEFSRNFRNEGIDKVHNPEFTVVEVYVSYKDYKWMMNFTEQMLEHICIEILGSTELKIGEYIINFKAPYRRITMIDVIEENTGVNIAGMNENQLREVCRFLHIEEDKTMSSGKLIDEIFGKKCEWKYIQPTFIIDYPKEMSPLCKCHRQNAELTERFELIVNGFELANAYSELNDPIDQRKRFEDQLKLSKKGDNEAMFIDQDFLRALEYGMPPTSGMGIGMDRLVMLLTKQTSIQEVLLFPHMRPEKLDY</sequence>
<protein>
    <recommendedName>
        <fullName evidence="1">Lysine--tRNA ligase</fullName>
        <ecNumber evidence="1">6.1.1.6</ecNumber>
    </recommendedName>
    <alternativeName>
        <fullName evidence="1">Lysyl-tRNA synthetase</fullName>
        <shortName evidence="1">LysRS</shortName>
    </alternativeName>
</protein>
<proteinExistence type="inferred from homology"/>
<dbReference type="EC" id="6.1.1.6" evidence="1"/>
<dbReference type="EMBL" id="AP010656">
    <property type="protein sequence ID" value="BAG83889.1"/>
    <property type="molecule type" value="Genomic_DNA"/>
</dbReference>
<dbReference type="SMR" id="B6YRR7"/>
<dbReference type="STRING" id="511995.CFPG_626"/>
<dbReference type="KEGG" id="aps:CFPG_626"/>
<dbReference type="eggNOG" id="COG1190">
    <property type="taxonomic scope" value="Bacteria"/>
</dbReference>
<dbReference type="HOGENOM" id="CLU_008255_6_2_10"/>
<dbReference type="OrthoDB" id="9801152at2"/>
<dbReference type="Proteomes" id="UP000000723">
    <property type="component" value="Chromosome"/>
</dbReference>
<dbReference type="GO" id="GO:0005829">
    <property type="term" value="C:cytosol"/>
    <property type="evidence" value="ECO:0007669"/>
    <property type="project" value="TreeGrafter"/>
</dbReference>
<dbReference type="GO" id="GO:0005524">
    <property type="term" value="F:ATP binding"/>
    <property type="evidence" value="ECO:0007669"/>
    <property type="project" value="UniProtKB-UniRule"/>
</dbReference>
<dbReference type="GO" id="GO:0004824">
    <property type="term" value="F:lysine-tRNA ligase activity"/>
    <property type="evidence" value="ECO:0007669"/>
    <property type="project" value="UniProtKB-UniRule"/>
</dbReference>
<dbReference type="GO" id="GO:0000287">
    <property type="term" value="F:magnesium ion binding"/>
    <property type="evidence" value="ECO:0007669"/>
    <property type="project" value="UniProtKB-UniRule"/>
</dbReference>
<dbReference type="GO" id="GO:0000049">
    <property type="term" value="F:tRNA binding"/>
    <property type="evidence" value="ECO:0007669"/>
    <property type="project" value="TreeGrafter"/>
</dbReference>
<dbReference type="GO" id="GO:0006430">
    <property type="term" value="P:lysyl-tRNA aminoacylation"/>
    <property type="evidence" value="ECO:0007669"/>
    <property type="project" value="UniProtKB-UniRule"/>
</dbReference>
<dbReference type="CDD" id="cd00775">
    <property type="entry name" value="LysRS_core"/>
    <property type="match status" value="1"/>
</dbReference>
<dbReference type="CDD" id="cd04322">
    <property type="entry name" value="LysRS_N"/>
    <property type="match status" value="1"/>
</dbReference>
<dbReference type="FunFam" id="2.40.50.140:FF:000024">
    <property type="entry name" value="Lysine--tRNA ligase"/>
    <property type="match status" value="1"/>
</dbReference>
<dbReference type="FunFam" id="3.30.930.10:FF:000238">
    <property type="entry name" value="Lysine--tRNA ligase"/>
    <property type="match status" value="1"/>
</dbReference>
<dbReference type="Gene3D" id="3.30.930.10">
    <property type="entry name" value="Bira Bifunctional Protein, Domain 2"/>
    <property type="match status" value="1"/>
</dbReference>
<dbReference type="Gene3D" id="2.40.50.140">
    <property type="entry name" value="Nucleic acid-binding proteins"/>
    <property type="match status" value="1"/>
</dbReference>
<dbReference type="HAMAP" id="MF_00252">
    <property type="entry name" value="Lys_tRNA_synth_class2"/>
    <property type="match status" value="1"/>
</dbReference>
<dbReference type="InterPro" id="IPR004364">
    <property type="entry name" value="Aa-tRNA-synt_II"/>
</dbReference>
<dbReference type="InterPro" id="IPR006195">
    <property type="entry name" value="aa-tRNA-synth_II"/>
</dbReference>
<dbReference type="InterPro" id="IPR045864">
    <property type="entry name" value="aa-tRNA-synth_II/BPL/LPL"/>
</dbReference>
<dbReference type="InterPro" id="IPR002313">
    <property type="entry name" value="Lys-tRNA-ligase_II"/>
</dbReference>
<dbReference type="InterPro" id="IPR044136">
    <property type="entry name" value="Lys-tRNA-ligase_II_N"/>
</dbReference>
<dbReference type="InterPro" id="IPR018149">
    <property type="entry name" value="Lys-tRNA-synth_II_C"/>
</dbReference>
<dbReference type="InterPro" id="IPR012340">
    <property type="entry name" value="NA-bd_OB-fold"/>
</dbReference>
<dbReference type="InterPro" id="IPR004365">
    <property type="entry name" value="NA-bd_OB_tRNA"/>
</dbReference>
<dbReference type="NCBIfam" id="TIGR00499">
    <property type="entry name" value="lysS_bact"/>
    <property type="match status" value="1"/>
</dbReference>
<dbReference type="NCBIfam" id="NF001756">
    <property type="entry name" value="PRK00484.1"/>
    <property type="match status" value="1"/>
</dbReference>
<dbReference type="PANTHER" id="PTHR42918:SF15">
    <property type="entry name" value="LYSINE--TRNA LIGASE, CHLOROPLASTIC_MITOCHONDRIAL"/>
    <property type="match status" value="1"/>
</dbReference>
<dbReference type="PANTHER" id="PTHR42918">
    <property type="entry name" value="LYSYL-TRNA SYNTHETASE"/>
    <property type="match status" value="1"/>
</dbReference>
<dbReference type="Pfam" id="PF00152">
    <property type="entry name" value="tRNA-synt_2"/>
    <property type="match status" value="1"/>
</dbReference>
<dbReference type="Pfam" id="PF01336">
    <property type="entry name" value="tRNA_anti-codon"/>
    <property type="match status" value="1"/>
</dbReference>
<dbReference type="PRINTS" id="PR00982">
    <property type="entry name" value="TRNASYNTHLYS"/>
</dbReference>
<dbReference type="SUPFAM" id="SSF55681">
    <property type="entry name" value="Class II aaRS and biotin synthetases"/>
    <property type="match status" value="1"/>
</dbReference>
<dbReference type="SUPFAM" id="SSF50249">
    <property type="entry name" value="Nucleic acid-binding proteins"/>
    <property type="match status" value="1"/>
</dbReference>
<dbReference type="PROSITE" id="PS50862">
    <property type="entry name" value="AA_TRNA_LIGASE_II"/>
    <property type="match status" value="1"/>
</dbReference>
<organism>
    <name type="scientific">Azobacteroides pseudotrichonymphae genomovar. CFP2</name>
    <dbReference type="NCBI Taxonomy" id="511995"/>
    <lineage>
        <taxon>Bacteria</taxon>
        <taxon>Pseudomonadati</taxon>
        <taxon>Bacteroidota</taxon>
        <taxon>Bacteroidia</taxon>
        <taxon>Bacteroidales</taxon>
        <taxon>Candidatus Azobacteroides</taxon>
    </lineage>
</organism>
<comment type="catalytic activity">
    <reaction evidence="1">
        <text>tRNA(Lys) + L-lysine + ATP = L-lysyl-tRNA(Lys) + AMP + diphosphate</text>
        <dbReference type="Rhea" id="RHEA:20792"/>
        <dbReference type="Rhea" id="RHEA-COMP:9696"/>
        <dbReference type="Rhea" id="RHEA-COMP:9697"/>
        <dbReference type="ChEBI" id="CHEBI:30616"/>
        <dbReference type="ChEBI" id="CHEBI:32551"/>
        <dbReference type="ChEBI" id="CHEBI:33019"/>
        <dbReference type="ChEBI" id="CHEBI:78442"/>
        <dbReference type="ChEBI" id="CHEBI:78529"/>
        <dbReference type="ChEBI" id="CHEBI:456215"/>
        <dbReference type="EC" id="6.1.1.6"/>
    </reaction>
</comment>
<comment type="cofactor">
    <cofactor evidence="1">
        <name>Mg(2+)</name>
        <dbReference type="ChEBI" id="CHEBI:18420"/>
    </cofactor>
    <text evidence="1">Binds 3 Mg(2+) ions per subunit.</text>
</comment>
<comment type="subunit">
    <text evidence="1">Homodimer.</text>
</comment>
<comment type="subcellular location">
    <subcellularLocation>
        <location evidence="1">Cytoplasm</location>
    </subcellularLocation>
</comment>
<comment type="similarity">
    <text evidence="1">Belongs to the class-II aminoacyl-tRNA synthetase family.</text>
</comment>